<dbReference type="EC" id="7.1.1.-" evidence="1"/>
<dbReference type="EMBL" id="AF383804">
    <property type="protein sequence ID" value="AAN61745.1"/>
    <property type="molecule type" value="Genomic_DNA"/>
</dbReference>
<dbReference type="SMR" id="Q8HVQ9"/>
<dbReference type="GO" id="GO:0009535">
    <property type="term" value="C:chloroplast thylakoid membrane"/>
    <property type="evidence" value="ECO:0007669"/>
    <property type="project" value="UniProtKB-SubCell"/>
</dbReference>
<dbReference type="GO" id="GO:0051539">
    <property type="term" value="F:4 iron, 4 sulfur cluster binding"/>
    <property type="evidence" value="ECO:0007669"/>
    <property type="project" value="UniProtKB-KW"/>
</dbReference>
<dbReference type="GO" id="GO:0005506">
    <property type="term" value="F:iron ion binding"/>
    <property type="evidence" value="ECO:0007669"/>
    <property type="project" value="UniProtKB-UniRule"/>
</dbReference>
<dbReference type="GO" id="GO:0008137">
    <property type="term" value="F:NADH dehydrogenase (ubiquinone) activity"/>
    <property type="evidence" value="ECO:0007669"/>
    <property type="project" value="InterPro"/>
</dbReference>
<dbReference type="GO" id="GO:0048038">
    <property type="term" value="F:quinone binding"/>
    <property type="evidence" value="ECO:0007669"/>
    <property type="project" value="UniProtKB-KW"/>
</dbReference>
<dbReference type="GO" id="GO:0019684">
    <property type="term" value="P:photosynthesis, light reaction"/>
    <property type="evidence" value="ECO:0007669"/>
    <property type="project" value="UniProtKB-UniRule"/>
</dbReference>
<dbReference type="FunFam" id="3.30.70.3270:FF:000006">
    <property type="entry name" value="NAD(P)H-quinone oxidoreductase subunit I, chloroplastic"/>
    <property type="match status" value="1"/>
</dbReference>
<dbReference type="Gene3D" id="3.30.70.3270">
    <property type="match status" value="1"/>
</dbReference>
<dbReference type="HAMAP" id="MF_01351">
    <property type="entry name" value="NDH1_NuoI"/>
    <property type="match status" value="1"/>
</dbReference>
<dbReference type="InterPro" id="IPR017896">
    <property type="entry name" value="4Fe4S_Fe-S-bd"/>
</dbReference>
<dbReference type="InterPro" id="IPR017900">
    <property type="entry name" value="4Fe4S_Fe_S_CS"/>
</dbReference>
<dbReference type="InterPro" id="IPR010226">
    <property type="entry name" value="NADH_quinone_OxRdtase_chainI"/>
</dbReference>
<dbReference type="InterPro" id="IPR004497">
    <property type="entry name" value="NDHI"/>
</dbReference>
<dbReference type="NCBIfam" id="TIGR00403">
    <property type="entry name" value="ndhI"/>
    <property type="match status" value="1"/>
</dbReference>
<dbReference type="NCBIfam" id="TIGR01971">
    <property type="entry name" value="NuoI"/>
    <property type="match status" value="1"/>
</dbReference>
<dbReference type="NCBIfam" id="NF004537">
    <property type="entry name" value="PRK05888.1-3"/>
    <property type="match status" value="1"/>
</dbReference>
<dbReference type="PANTHER" id="PTHR47275">
    <property type="entry name" value="NAD(P)H-QUINONE OXIDOREDUCTASE SUBUNIT I, CHLOROPLASTIC"/>
    <property type="match status" value="1"/>
</dbReference>
<dbReference type="PANTHER" id="PTHR47275:SF1">
    <property type="entry name" value="NAD(P)H-QUINONE OXIDOREDUCTASE SUBUNIT I, CHLOROPLASTIC"/>
    <property type="match status" value="1"/>
</dbReference>
<dbReference type="Pfam" id="PF00037">
    <property type="entry name" value="Fer4"/>
    <property type="match status" value="2"/>
</dbReference>
<dbReference type="SUPFAM" id="SSF54862">
    <property type="entry name" value="4Fe-4S ferredoxins"/>
    <property type="match status" value="1"/>
</dbReference>
<dbReference type="PROSITE" id="PS00198">
    <property type="entry name" value="4FE4S_FER_1"/>
    <property type="match status" value="2"/>
</dbReference>
<dbReference type="PROSITE" id="PS51379">
    <property type="entry name" value="4FE4S_FER_2"/>
    <property type="match status" value="2"/>
</dbReference>
<feature type="chain" id="PRO_0000250804" description="NAD(P)H-quinone oxidoreductase subunit I, chloroplastic">
    <location>
        <begin position="1"/>
        <end position="166"/>
    </location>
</feature>
<feature type="domain" description="4Fe-4S ferredoxin-type 1" evidence="1">
    <location>
        <begin position="55"/>
        <end position="84"/>
    </location>
</feature>
<feature type="domain" description="4Fe-4S ferredoxin-type 2" evidence="1">
    <location>
        <begin position="95"/>
        <end position="124"/>
    </location>
</feature>
<feature type="binding site" evidence="1">
    <location>
        <position position="64"/>
    </location>
    <ligand>
        <name>[4Fe-4S] cluster</name>
        <dbReference type="ChEBI" id="CHEBI:49883"/>
        <label>1</label>
    </ligand>
</feature>
<feature type="binding site" evidence="1">
    <location>
        <position position="67"/>
    </location>
    <ligand>
        <name>[4Fe-4S] cluster</name>
        <dbReference type="ChEBI" id="CHEBI:49883"/>
        <label>1</label>
    </ligand>
</feature>
<feature type="binding site" evidence="1">
    <location>
        <position position="70"/>
    </location>
    <ligand>
        <name>[4Fe-4S] cluster</name>
        <dbReference type="ChEBI" id="CHEBI:49883"/>
        <label>1</label>
    </ligand>
</feature>
<feature type="binding site" evidence="1">
    <location>
        <position position="74"/>
    </location>
    <ligand>
        <name>[4Fe-4S] cluster</name>
        <dbReference type="ChEBI" id="CHEBI:49883"/>
        <label>2</label>
    </ligand>
</feature>
<feature type="binding site" evidence="1">
    <location>
        <position position="104"/>
    </location>
    <ligand>
        <name>[4Fe-4S] cluster</name>
        <dbReference type="ChEBI" id="CHEBI:49883"/>
        <label>2</label>
    </ligand>
</feature>
<feature type="binding site" evidence="1">
    <location>
        <position position="107"/>
    </location>
    <ligand>
        <name>[4Fe-4S] cluster</name>
        <dbReference type="ChEBI" id="CHEBI:49883"/>
        <label>2</label>
    </ligand>
</feature>
<feature type="binding site" evidence="1">
    <location>
        <position position="110"/>
    </location>
    <ligand>
        <name>[4Fe-4S] cluster</name>
        <dbReference type="ChEBI" id="CHEBI:49883"/>
        <label>2</label>
    </ligand>
</feature>
<feature type="binding site" evidence="1">
    <location>
        <position position="114"/>
    </location>
    <ligand>
        <name>[4Fe-4S] cluster</name>
        <dbReference type="ChEBI" id="CHEBI:49883"/>
        <label>1</label>
    </ligand>
</feature>
<evidence type="ECO:0000255" key="1">
    <source>
        <dbReference type="HAMAP-Rule" id="MF_01351"/>
    </source>
</evidence>
<proteinExistence type="inferred from homology"/>
<reference key="1">
    <citation type="submission" date="2003-01" db="EMBL/GenBank/DDBJ databases">
        <title>Chloroplast DNA phylogeny of tribe Heliantheae (Asteraceae).</title>
        <authorList>
            <person name="Panero J.L."/>
            <person name="Baldwin B.G."/>
            <person name="Schilling E.E."/>
            <person name="Clevinger J.A."/>
        </authorList>
    </citation>
    <scope>NUCLEOTIDE SEQUENCE [GENOMIC DNA]</scope>
</reference>
<organism>
    <name type="scientific">Jaegeria hirta</name>
    <name type="common">Botao de ouro</name>
    <name type="synonym">Acmella hirta</name>
    <dbReference type="NCBI Taxonomy" id="183035"/>
    <lineage>
        <taxon>Eukaryota</taxon>
        <taxon>Viridiplantae</taxon>
        <taxon>Streptophyta</taxon>
        <taxon>Embryophyta</taxon>
        <taxon>Tracheophyta</taxon>
        <taxon>Spermatophyta</taxon>
        <taxon>Magnoliopsida</taxon>
        <taxon>eudicotyledons</taxon>
        <taxon>Gunneridae</taxon>
        <taxon>Pentapetalae</taxon>
        <taxon>asterids</taxon>
        <taxon>campanulids</taxon>
        <taxon>Asterales</taxon>
        <taxon>Asteraceae</taxon>
        <taxon>Asteroideae</taxon>
        <taxon>Heliantheae alliance</taxon>
        <taxon>Millerieae</taxon>
        <taxon>Jaegeria</taxon>
    </lineage>
</organism>
<gene>
    <name evidence="1" type="primary">ndhI</name>
</gene>
<keyword id="KW-0004">4Fe-4S</keyword>
<keyword id="KW-0150">Chloroplast</keyword>
<keyword id="KW-0408">Iron</keyword>
<keyword id="KW-0411">Iron-sulfur</keyword>
<keyword id="KW-0472">Membrane</keyword>
<keyword id="KW-0479">Metal-binding</keyword>
<keyword id="KW-0520">NAD</keyword>
<keyword id="KW-0521">NADP</keyword>
<keyword id="KW-0934">Plastid</keyword>
<keyword id="KW-0618">Plastoquinone</keyword>
<keyword id="KW-0874">Quinone</keyword>
<keyword id="KW-0677">Repeat</keyword>
<keyword id="KW-0793">Thylakoid</keyword>
<keyword id="KW-1278">Translocase</keyword>
<sequence length="166" mass="19509">MFPMVTEFMNYGQQTVRAARYIGQGFMITLSHANRLPVTIQYPYEKLITSERFRGRIHFEFDKCIACEVCVRVCPIDLPVVDWKLETDIRKKRLLNYSIDFGICIFCGNCVEYCPTNCLSMTEEYELSTYDRHELNYNQIALGRLPMSIIDDYTIRTIFNLPEIKT</sequence>
<name>NDHI_JAEHI</name>
<protein>
    <recommendedName>
        <fullName evidence="1">NAD(P)H-quinone oxidoreductase subunit I, chloroplastic</fullName>
        <ecNumber evidence="1">7.1.1.-</ecNumber>
    </recommendedName>
    <alternativeName>
        <fullName evidence="1">NAD(P)H dehydrogenase subunit I</fullName>
        <shortName evidence="1">NDH subunit I</shortName>
    </alternativeName>
    <alternativeName>
        <fullName evidence="1">NADH-plastoquinone oxidoreductase subunit I</fullName>
    </alternativeName>
</protein>
<accession>Q8HVQ9</accession>
<comment type="function">
    <text evidence="1">NDH shuttles electrons from NAD(P)H:plastoquinone, via FMN and iron-sulfur (Fe-S) centers, to quinones in the photosynthetic chain and possibly in a chloroplast respiratory chain. The immediate electron acceptor for the enzyme in this species is believed to be plastoquinone. Couples the redox reaction to proton translocation, and thus conserves the redox energy in a proton gradient.</text>
</comment>
<comment type="catalytic activity">
    <reaction evidence="1">
        <text>a plastoquinone + NADH + (n+1) H(+)(in) = a plastoquinol + NAD(+) + n H(+)(out)</text>
        <dbReference type="Rhea" id="RHEA:42608"/>
        <dbReference type="Rhea" id="RHEA-COMP:9561"/>
        <dbReference type="Rhea" id="RHEA-COMP:9562"/>
        <dbReference type="ChEBI" id="CHEBI:15378"/>
        <dbReference type="ChEBI" id="CHEBI:17757"/>
        <dbReference type="ChEBI" id="CHEBI:57540"/>
        <dbReference type="ChEBI" id="CHEBI:57945"/>
        <dbReference type="ChEBI" id="CHEBI:62192"/>
    </reaction>
</comment>
<comment type="catalytic activity">
    <reaction evidence="1">
        <text>a plastoquinone + NADPH + (n+1) H(+)(in) = a plastoquinol + NADP(+) + n H(+)(out)</text>
        <dbReference type="Rhea" id="RHEA:42612"/>
        <dbReference type="Rhea" id="RHEA-COMP:9561"/>
        <dbReference type="Rhea" id="RHEA-COMP:9562"/>
        <dbReference type="ChEBI" id="CHEBI:15378"/>
        <dbReference type="ChEBI" id="CHEBI:17757"/>
        <dbReference type="ChEBI" id="CHEBI:57783"/>
        <dbReference type="ChEBI" id="CHEBI:58349"/>
        <dbReference type="ChEBI" id="CHEBI:62192"/>
    </reaction>
</comment>
<comment type="cofactor">
    <cofactor evidence="1">
        <name>[4Fe-4S] cluster</name>
        <dbReference type="ChEBI" id="CHEBI:49883"/>
    </cofactor>
    <text evidence="1">Binds 2 [4Fe-4S] clusters per subunit.</text>
</comment>
<comment type="subunit">
    <text evidence="1">NDH is composed of at least 16 different subunits, 5 of which are encoded in the nucleus.</text>
</comment>
<comment type="subcellular location">
    <subcellularLocation>
        <location evidence="1">Plastid</location>
        <location evidence="1">Chloroplast thylakoid membrane</location>
        <topology evidence="1">Peripheral membrane protein</topology>
    </subcellularLocation>
</comment>
<comment type="similarity">
    <text evidence="1">Belongs to the complex I 23 kDa subunit family.</text>
</comment>
<geneLocation type="chloroplast"/>